<evidence type="ECO:0000255" key="1"/>
<evidence type="ECO:0000255" key="2">
    <source>
        <dbReference type="PROSITE-ProRule" id="PRU00521"/>
    </source>
</evidence>
<evidence type="ECO:0000269" key="3">
    <source>
    </source>
</evidence>
<evidence type="ECO:0000305" key="4"/>
<evidence type="ECO:0000312" key="5">
    <source>
        <dbReference type="HGNC" id="HGNC:13968"/>
    </source>
</evidence>
<accession>P59922</accession>
<comment type="function">
    <text evidence="4">Odorant receptor.</text>
</comment>
<comment type="subcellular location">
    <subcellularLocation>
        <location>Cell membrane</location>
        <topology>Multi-pass membrane protein</topology>
    </subcellularLocation>
</comment>
<comment type="polymorphism">
    <text evidence="3">This gene is a pseudogene on the reference genome but has been found to be protein coding in some individuals.</text>
</comment>
<comment type="similarity">
    <text evidence="2">Belongs to the G-protein coupled receptor 1 family.</text>
</comment>
<comment type="online information" name="Human Olfactory Receptor Data Exploratorium (HORDE)">
    <link uri="http://genome.weizmann.ac.il/horde/card/index/symbol:OR2B8P"/>
</comment>
<sequence length="312" mass="35019">MDQKNGSSFTGFILLGFSDRPQLELVLFVVLLIFYIFTLLGNKTIIVLSHLDPHLHTPMYFFFSNLSFLDLCYTTGIVPQLLVNLRGADKSISYGGCVVQLYISLGLGSTECVLLGVMVFDRYAAVCRPLHYTVVMHPCLYVLMASTSWVIGFANSLLQTVLILLLTLCGRNKLEHFLCEVPPLLKLACVDTTMNESELFFVSVIILLVPVALIIFSYSQIVRAVMRIKLATGQRKVFGTCGSHLTVVSLFYGTAIYAYLQPGNNYSQDQGKFISLFYTIITPMINPLIYTLRNKDVKGALKKVLWKNYDSR</sequence>
<feature type="chain" id="PRO_0000150463" description="Olfactory receptor 2B8">
    <location>
        <begin position="1"/>
        <end position="312"/>
    </location>
</feature>
<feature type="topological domain" description="Extracellular" evidence="1">
    <location>
        <begin position="1"/>
        <end position="25"/>
    </location>
</feature>
<feature type="transmembrane region" description="Helical; Name=1" evidence="1">
    <location>
        <begin position="26"/>
        <end position="49"/>
    </location>
</feature>
<feature type="topological domain" description="Cytoplasmic" evidence="1">
    <location>
        <begin position="50"/>
        <end position="57"/>
    </location>
</feature>
<feature type="transmembrane region" description="Helical; Name=2" evidence="1">
    <location>
        <begin position="58"/>
        <end position="79"/>
    </location>
</feature>
<feature type="topological domain" description="Extracellular" evidence="1">
    <location>
        <begin position="80"/>
        <end position="100"/>
    </location>
</feature>
<feature type="transmembrane region" description="Helical; Name=3" evidence="1">
    <location>
        <begin position="101"/>
        <end position="120"/>
    </location>
</feature>
<feature type="topological domain" description="Cytoplasmic" evidence="1">
    <location>
        <begin position="121"/>
        <end position="139"/>
    </location>
</feature>
<feature type="transmembrane region" description="Helical; Name=4" evidence="1">
    <location>
        <begin position="140"/>
        <end position="158"/>
    </location>
</feature>
<feature type="topological domain" description="Extracellular" evidence="1">
    <location>
        <begin position="159"/>
        <end position="195"/>
    </location>
</feature>
<feature type="transmembrane region" description="Helical; Name=5" evidence="1">
    <location>
        <begin position="196"/>
        <end position="219"/>
    </location>
</feature>
<feature type="topological domain" description="Cytoplasmic" evidence="1">
    <location>
        <begin position="220"/>
        <end position="236"/>
    </location>
</feature>
<feature type="transmembrane region" description="Helical; Name=6" evidence="1">
    <location>
        <begin position="237"/>
        <end position="259"/>
    </location>
</feature>
<feature type="topological domain" description="Extracellular" evidence="1">
    <location>
        <begin position="260"/>
        <end position="272"/>
    </location>
</feature>
<feature type="transmembrane region" description="Helical; Name=7" evidence="1">
    <location>
        <begin position="273"/>
        <end position="292"/>
    </location>
</feature>
<feature type="topological domain" description="Cytoplasmic" evidence="1">
    <location>
        <begin position="293"/>
        <end position="312"/>
    </location>
</feature>
<feature type="glycosylation site" description="N-linked (GlcNAc...) asparagine" evidence="1">
    <location>
        <position position="5"/>
    </location>
</feature>
<feature type="glycosylation site" description="N-linked (GlcNAc...) asparagine" evidence="1">
    <location>
        <position position="195"/>
    </location>
</feature>
<feature type="glycosylation site" description="N-linked (GlcNAc...) asparagine" evidence="1">
    <location>
        <position position="265"/>
    </location>
</feature>
<feature type="disulfide bond" evidence="2">
    <location>
        <begin position="97"/>
        <end position="189"/>
    </location>
</feature>
<protein>
    <recommendedName>
        <fullName>Olfactory receptor 2B8</fullName>
    </recommendedName>
    <alternativeName>
        <fullName>Hs6M1-29P</fullName>
    </alternativeName>
</protein>
<organism>
    <name type="scientific">Homo sapiens</name>
    <name type="common">Human</name>
    <dbReference type="NCBI Taxonomy" id="9606"/>
    <lineage>
        <taxon>Eukaryota</taxon>
        <taxon>Metazoa</taxon>
        <taxon>Chordata</taxon>
        <taxon>Craniata</taxon>
        <taxon>Vertebrata</taxon>
        <taxon>Euteleostomi</taxon>
        <taxon>Mammalia</taxon>
        <taxon>Eutheria</taxon>
        <taxon>Euarchontoglires</taxon>
        <taxon>Primates</taxon>
        <taxon>Haplorrhini</taxon>
        <taxon>Catarrhini</taxon>
        <taxon>Hominidae</taxon>
        <taxon>Homo</taxon>
    </lineage>
</organism>
<gene>
    <name evidence="5" type="primary">OR2B8</name>
    <name evidence="5" type="synonym">OR2B8P</name>
</gene>
<name>OR2B8_HUMAN</name>
<dbReference type="EMBL" id="AL121944">
    <property type="status" value="NOT_ANNOTATED_CDS"/>
    <property type="molecule type" value="Genomic_DNA"/>
</dbReference>
<dbReference type="EMBL" id="GU251070">
    <property type="status" value="NOT_ANNOTATED_CDS"/>
    <property type="molecule type" value="Genomic_DNA"/>
</dbReference>
<dbReference type="SMR" id="P59922"/>
<dbReference type="FunCoup" id="P59922">
    <property type="interactions" value="627"/>
</dbReference>
<dbReference type="GlyCosmos" id="P59922">
    <property type="glycosylation" value="3 sites, No reported glycans"/>
</dbReference>
<dbReference type="GlyGen" id="P59922">
    <property type="glycosylation" value="3 sites"/>
</dbReference>
<dbReference type="BioMuta" id="HGNC:13968"/>
<dbReference type="DMDM" id="38372635"/>
<dbReference type="AGR" id="HGNC:13968"/>
<dbReference type="GeneCards" id="OR2B8"/>
<dbReference type="HGNC" id="HGNC:13968">
    <property type="gene designation" value="OR2B8"/>
</dbReference>
<dbReference type="neXtProt" id="NX_P59922"/>
<dbReference type="InParanoid" id="P59922"/>
<dbReference type="OrthoDB" id="5950740at2759"/>
<dbReference type="PAN-GO" id="P59922">
    <property type="GO annotations" value="0 GO annotations based on evolutionary models"/>
</dbReference>
<dbReference type="PhylomeDB" id="P59922"/>
<dbReference type="PathwayCommons" id="P59922"/>
<dbReference type="Pharos" id="P59922">
    <property type="development level" value="Tdark"/>
</dbReference>
<dbReference type="Proteomes" id="UP000005640">
    <property type="component" value="Unplaced"/>
</dbReference>
<dbReference type="RNAct" id="P59922">
    <property type="molecule type" value="protein"/>
</dbReference>
<dbReference type="GO" id="GO:0005886">
    <property type="term" value="C:plasma membrane"/>
    <property type="evidence" value="ECO:0000318"/>
    <property type="project" value="GO_Central"/>
</dbReference>
<dbReference type="GO" id="GO:0004930">
    <property type="term" value="F:G protein-coupled receptor activity"/>
    <property type="evidence" value="ECO:0007669"/>
    <property type="project" value="UniProtKB-KW"/>
</dbReference>
<dbReference type="GO" id="GO:0004984">
    <property type="term" value="F:olfactory receptor activity"/>
    <property type="evidence" value="ECO:0000318"/>
    <property type="project" value="GO_Central"/>
</dbReference>
<dbReference type="GO" id="GO:0050911">
    <property type="term" value="P:detection of chemical stimulus involved in sensory perception of smell"/>
    <property type="evidence" value="ECO:0000318"/>
    <property type="project" value="GO_Central"/>
</dbReference>
<dbReference type="CDD" id="cd15947">
    <property type="entry name" value="7tmA_OR2B-like"/>
    <property type="match status" value="1"/>
</dbReference>
<dbReference type="FunFam" id="1.10.1220.70:FF:000001">
    <property type="entry name" value="Olfactory receptor"/>
    <property type="match status" value="1"/>
</dbReference>
<dbReference type="FunFam" id="1.20.1070.10:FF:000005">
    <property type="entry name" value="Olfactory receptor"/>
    <property type="match status" value="1"/>
</dbReference>
<dbReference type="Gene3D" id="1.20.1070.10">
    <property type="entry name" value="Rhodopsin 7-helix transmembrane proteins"/>
    <property type="match status" value="1"/>
</dbReference>
<dbReference type="InterPro" id="IPR000276">
    <property type="entry name" value="GPCR_Rhodpsn"/>
</dbReference>
<dbReference type="InterPro" id="IPR017452">
    <property type="entry name" value="GPCR_Rhodpsn_7TM"/>
</dbReference>
<dbReference type="InterPro" id="IPR000725">
    <property type="entry name" value="Olfact_rcpt"/>
</dbReference>
<dbReference type="PANTHER" id="PTHR26453">
    <property type="entry name" value="OLFACTORY RECEPTOR"/>
    <property type="match status" value="1"/>
</dbReference>
<dbReference type="Pfam" id="PF13853">
    <property type="entry name" value="7tm_4"/>
    <property type="match status" value="1"/>
</dbReference>
<dbReference type="PRINTS" id="PR00237">
    <property type="entry name" value="GPCRRHODOPSN"/>
</dbReference>
<dbReference type="PRINTS" id="PR00245">
    <property type="entry name" value="OLFACTORYR"/>
</dbReference>
<dbReference type="SUPFAM" id="SSF81321">
    <property type="entry name" value="Family A G protein-coupled receptor-like"/>
    <property type="match status" value="1"/>
</dbReference>
<dbReference type="PROSITE" id="PS50262">
    <property type="entry name" value="G_PROTEIN_RECEP_F1_2"/>
    <property type="match status" value="1"/>
</dbReference>
<keyword id="KW-1003">Cell membrane</keyword>
<keyword id="KW-1015">Disulfide bond</keyword>
<keyword id="KW-0297">G-protein coupled receptor</keyword>
<keyword id="KW-0325">Glycoprotein</keyword>
<keyword id="KW-0472">Membrane</keyword>
<keyword id="KW-0552">Olfaction</keyword>
<keyword id="KW-0675">Receptor</keyword>
<keyword id="KW-1185">Reference proteome</keyword>
<keyword id="KW-0716">Sensory transduction</keyword>
<keyword id="KW-0807">Transducer</keyword>
<keyword id="KW-0812">Transmembrane</keyword>
<keyword id="KW-1133">Transmembrane helix</keyword>
<reference key="1">
    <citation type="journal article" date="2003" name="Nature">
        <title>The DNA sequence and analysis of human chromosome 6.</title>
        <authorList>
            <person name="Mungall A.J."/>
            <person name="Palmer S.A."/>
            <person name="Sims S.K."/>
            <person name="Edwards C.A."/>
            <person name="Ashurst J.L."/>
            <person name="Wilming L."/>
            <person name="Jones M.C."/>
            <person name="Horton R."/>
            <person name="Hunt S.E."/>
            <person name="Scott C.E."/>
            <person name="Gilbert J.G.R."/>
            <person name="Clamp M.E."/>
            <person name="Bethel G."/>
            <person name="Milne S."/>
            <person name="Ainscough R."/>
            <person name="Almeida J.P."/>
            <person name="Ambrose K.D."/>
            <person name="Andrews T.D."/>
            <person name="Ashwell R.I.S."/>
            <person name="Babbage A.K."/>
            <person name="Bagguley C.L."/>
            <person name="Bailey J."/>
            <person name="Banerjee R."/>
            <person name="Barker D.J."/>
            <person name="Barlow K.F."/>
            <person name="Bates K."/>
            <person name="Beare D.M."/>
            <person name="Beasley H."/>
            <person name="Beasley O."/>
            <person name="Bird C.P."/>
            <person name="Blakey S.E."/>
            <person name="Bray-Allen S."/>
            <person name="Brook J."/>
            <person name="Brown A.J."/>
            <person name="Brown J.Y."/>
            <person name="Burford D.C."/>
            <person name="Burrill W."/>
            <person name="Burton J."/>
            <person name="Carder C."/>
            <person name="Carter N.P."/>
            <person name="Chapman J.C."/>
            <person name="Clark S.Y."/>
            <person name="Clark G."/>
            <person name="Clee C.M."/>
            <person name="Clegg S."/>
            <person name="Cobley V."/>
            <person name="Collier R.E."/>
            <person name="Collins J.E."/>
            <person name="Colman L.K."/>
            <person name="Corby N.R."/>
            <person name="Coville G.J."/>
            <person name="Culley K.M."/>
            <person name="Dhami P."/>
            <person name="Davies J."/>
            <person name="Dunn M."/>
            <person name="Earthrowl M.E."/>
            <person name="Ellington A.E."/>
            <person name="Evans K.A."/>
            <person name="Faulkner L."/>
            <person name="Francis M.D."/>
            <person name="Frankish A."/>
            <person name="Frankland J."/>
            <person name="French L."/>
            <person name="Garner P."/>
            <person name="Garnett J."/>
            <person name="Ghori M.J."/>
            <person name="Gilby L.M."/>
            <person name="Gillson C.J."/>
            <person name="Glithero R.J."/>
            <person name="Grafham D.V."/>
            <person name="Grant M."/>
            <person name="Gribble S."/>
            <person name="Griffiths C."/>
            <person name="Griffiths M.N.D."/>
            <person name="Hall R."/>
            <person name="Halls K.S."/>
            <person name="Hammond S."/>
            <person name="Harley J.L."/>
            <person name="Hart E.A."/>
            <person name="Heath P.D."/>
            <person name="Heathcott R."/>
            <person name="Holmes S.J."/>
            <person name="Howden P.J."/>
            <person name="Howe K.L."/>
            <person name="Howell G.R."/>
            <person name="Huckle E."/>
            <person name="Humphray S.J."/>
            <person name="Humphries M.D."/>
            <person name="Hunt A.R."/>
            <person name="Johnson C.M."/>
            <person name="Joy A.A."/>
            <person name="Kay M."/>
            <person name="Keenan S.J."/>
            <person name="Kimberley A.M."/>
            <person name="King A."/>
            <person name="Laird G.K."/>
            <person name="Langford C."/>
            <person name="Lawlor S."/>
            <person name="Leongamornlert D.A."/>
            <person name="Leversha M."/>
            <person name="Lloyd C.R."/>
            <person name="Lloyd D.M."/>
            <person name="Loveland J.E."/>
            <person name="Lovell J."/>
            <person name="Martin S."/>
            <person name="Mashreghi-Mohammadi M."/>
            <person name="Maslen G.L."/>
            <person name="Matthews L."/>
            <person name="McCann O.T."/>
            <person name="McLaren S.J."/>
            <person name="McLay K."/>
            <person name="McMurray A."/>
            <person name="Moore M.J.F."/>
            <person name="Mullikin J.C."/>
            <person name="Niblett D."/>
            <person name="Nickerson T."/>
            <person name="Novik K.L."/>
            <person name="Oliver K."/>
            <person name="Overton-Larty E.K."/>
            <person name="Parker A."/>
            <person name="Patel R."/>
            <person name="Pearce A.V."/>
            <person name="Peck A.I."/>
            <person name="Phillimore B.J.C.T."/>
            <person name="Phillips S."/>
            <person name="Plumb R.W."/>
            <person name="Porter K.M."/>
            <person name="Ramsey Y."/>
            <person name="Ranby S.A."/>
            <person name="Rice C.M."/>
            <person name="Ross M.T."/>
            <person name="Searle S.M."/>
            <person name="Sehra H.K."/>
            <person name="Sheridan E."/>
            <person name="Skuce C.D."/>
            <person name="Smith S."/>
            <person name="Smith M."/>
            <person name="Spraggon L."/>
            <person name="Squares S.L."/>
            <person name="Steward C.A."/>
            <person name="Sycamore N."/>
            <person name="Tamlyn-Hall G."/>
            <person name="Tester J."/>
            <person name="Theaker A.J."/>
            <person name="Thomas D.W."/>
            <person name="Thorpe A."/>
            <person name="Tracey A."/>
            <person name="Tromans A."/>
            <person name="Tubby B."/>
            <person name="Wall M."/>
            <person name="Wallis J.M."/>
            <person name="West A.P."/>
            <person name="White S.S."/>
            <person name="Whitehead S.L."/>
            <person name="Whittaker H."/>
            <person name="Wild A."/>
            <person name="Willey D.J."/>
            <person name="Wilmer T.E."/>
            <person name="Wood J.M."/>
            <person name="Wray P.W."/>
            <person name="Wyatt J.C."/>
            <person name="Young L."/>
            <person name="Younger R.M."/>
            <person name="Bentley D.R."/>
            <person name="Coulson A."/>
            <person name="Durbin R.M."/>
            <person name="Hubbard T."/>
            <person name="Sulston J.E."/>
            <person name="Dunham I."/>
            <person name="Rogers J."/>
            <person name="Beck S."/>
        </authorList>
    </citation>
    <scope>NUCLEOTIDE SEQUENCE [LARGE SCALE GENOMIC DNA]</scope>
</reference>
<reference key="2">
    <citation type="journal article" date="2010" name="Hum. Immunol.">
        <title>Variation and linkage disequilibrium within odorant receptor gene clusters linked to the human major histocompatibility complex.</title>
        <authorList>
            <person name="Santos P.S."/>
            <person name="Seki Uehara C.J."/>
            <person name="Ziegler A."/>
            <person name="Uchanska-Ziegler B."/>
            <person name="Bicalho M.G."/>
        </authorList>
    </citation>
    <scope>NUCLEOTIDE SEQUENCE [GENOMIC DNA]</scope>
    <scope>POLYMORPHISM</scope>
</reference>
<proteinExistence type="inferred from homology"/>